<protein>
    <recommendedName>
        <fullName evidence="1">Thiamine-phosphate synthase</fullName>
        <shortName evidence="1">TP synthase</shortName>
        <shortName evidence="1">TPS</shortName>
        <ecNumber evidence="1">2.5.1.3</ecNumber>
    </recommendedName>
    <alternativeName>
        <fullName evidence="1">Thiamine-phosphate pyrophosphorylase</fullName>
        <shortName evidence="1">TMP pyrophosphorylase</shortName>
        <shortName evidence="1">TMP-PPase</shortName>
    </alternativeName>
</protein>
<reference key="1">
    <citation type="journal article" date="2005" name="J. Bacteriol.">
        <title>Genomic sequence of an otitis media isolate of nontypeable Haemophilus influenzae: comparative study with H. influenzae serotype d, strain KW20.</title>
        <authorList>
            <person name="Harrison A."/>
            <person name="Dyer D.W."/>
            <person name="Gillaspy A."/>
            <person name="Ray W.C."/>
            <person name="Mungur R."/>
            <person name="Carson M.B."/>
            <person name="Zhong H."/>
            <person name="Gipson J."/>
            <person name="Gipson M."/>
            <person name="Johnson L.S."/>
            <person name="Lewis L."/>
            <person name="Bakaletz L.O."/>
            <person name="Munson R.S. Jr."/>
        </authorList>
    </citation>
    <scope>NUCLEOTIDE SEQUENCE [LARGE SCALE GENOMIC DNA]</scope>
    <source>
        <strain>86-028NP</strain>
    </source>
</reference>
<name>THIE_HAEI8</name>
<gene>
    <name evidence="1" type="primary">thiE</name>
    <name type="ordered locus">NTHI0542</name>
</gene>
<evidence type="ECO:0000255" key="1">
    <source>
        <dbReference type="HAMAP-Rule" id="MF_00097"/>
    </source>
</evidence>
<organism>
    <name type="scientific">Haemophilus influenzae (strain 86-028NP)</name>
    <dbReference type="NCBI Taxonomy" id="281310"/>
    <lineage>
        <taxon>Bacteria</taxon>
        <taxon>Pseudomonadati</taxon>
        <taxon>Pseudomonadota</taxon>
        <taxon>Gammaproteobacteria</taxon>
        <taxon>Pasteurellales</taxon>
        <taxon>Pasteurellaceae</taxon>
        <taxon>Haemophilus</taxon>
    </lineage>
</organism>
<sequence length="226" mass="24750">MKNIQKILPLYFVAGTQDCRHLGENLSENLLFVLKQALEGGITCFQFRDKGKFSLEHTPSAQKALAMSCRDLCREYGVPFIVDDNVDLALEIEADGIHVGQSDMPVQEIRAKTDKPLIIGWSVNRLDEAKIGENLAEIDYFGIGPIFPTQSKENPKPTLGMAFIQTLRNVGITKPLVAIGGVKLAHVKTLREFGADGVAVITAITHADNVQAATKALREASDEYAK</sequence>
<proteinExistence type="inferred from homology"/>
<accession>Q4QNC6</accession>
<dbReference type="EC" id="2.5.1.3" evidence="1"/>
<dbReference type="EMBL" id="CP000057">
    <property type="protein sequence ID" value="AAX87471.1"/>
    <property type="molecule type" value="Genomic_DNA"/>
</dbReference>
<dbReference type="RefSeq" id="WP_011272036.1">
    <property type="nucleotide sequence ID" value="NC_007146.2"/>
</dbReference>
<dbReference type="SMR" id="Q4QNC6"/>
<dbReference type="KEGG" id="hit:NTHI0542"/>
<dbReference type="HOGENOM" id="CLU_018272_3_2_6"/>
<dbReference type="UniPathway" id="UPA00060">
    <property type="reaction ID" value="UER00141"/>
</dbReference>
<dbReference type="Proteomes" id="UP000002525">
    <property type="component" value="Chromosome"/>
</dbReference>
<dbReference type="GO" id="GO:0005737">
    <property type="term" value="C:cytoplasm"/>
    <property type="evidence" value="ECO:0007669"/>
    <property type="project" value="TreeGrafter"/>
</dbReference>
<dbReference type="GO" id="GO:0000287">
    <property type="term" value="F:magnesium ion binding"/>
    <property type="evidence" value="ECO:0007669"/>
    <property type="project" value="UniProtKB-UniRule"/>
</dbReference>
<dbReference type="GO" id="GO:0004789">
    <property type="term" value="F:thiamine-phosphate diphosphorylase activity"/>
    <property type="evidence" value="ECO:0007669"/>
    <property type="project" value="UniProtKB-UniRule"/>
</dbReference>
<dbReference type="GO" id="GO:0009228">
    <property type="term" value="P:thiamine biosynthetic process"/>
    <property type="evidence" value="ECO:0007669"/>
    <property type="project" value="UniProtKB-KW"/>
</dbReference>
<dbReference type="GO" id="GO:0009229">
    <property type="term" value="P:thiamine diphosphate biosynthetic process"/>
    <property type="evidence" value="ECO:0007669"/>
    <property type="project" value="UniProtKB-UniRule"/>
</dbReference>
<dbReference type="CDD" id="cd00564">
    <property type="entry name" value="TMP_TenI"/>
    <property type="match status" value="1"/>
</dbReference>
<dbReference type="FunFam" id="3.20.20.70:FF:000096">
    <property type="entry name" value="Thiamine-phosphate synthase"/>
    <property type="match status" value="1"/>
</dbReference>
<dbReference type="Gene3D" id="3.20.20.70">
    <property type="entry name" value="Aldolase class I"/>
    <property type="match status" value="1"/>
</dbReference>
<dbReference type="HAMAP" id="MF_00097">
    <property type="entry name" value="TMP_synthase"/>
    <property type="match status" value="1"/>
</dbReference>
<dbReference type="InterPro" id="IPR013785">
    <property type="entry name" value="Aldolase_TIM"/>
</dbReference>
<dbReference type="InterPro" id="IPR036206">
    <property type="entry name" value="ThiamineP_synth_sf"/>
</dbReference>
<dbReference type="InterPro" id="IPR022998">
    <property type="entry name" value="ThiamineP_synth_TenI"/>
</dbReference>
<dbReference type="InterPro" id="IPR034291">
    <property type="entry name" value="TMP_synthase"/>
</dbReference>
<dbReference type="NCBIfam" id="TIGR00693">
    <property type="entry name" value="thiE"/>
    <property type="match status" value="1"/>
</dbReference>
<dbReference type="PANTHER" id="PTHR20857">
    <property type="entry name" value="THIAMINE-PHOSPHATE PYROPHOSPHORYLASE"/>
    <property type="match status" value="1"/>
</dbReference>
<dbReference type="PANTHER" id="PTHR20857:SF15">
    <property type="entry name" value="THIAMINE-PHOSPHATE SYNTHASE"/>
    <property type="match status" value="1"/>
</dbReference>
<dbReference type="Pfam" id="PF02581">
    <property type="entry name" value="TMP-TENI"/>
    <property type="match status" value="1"/>
</dbReference>
<dbReference type="SUPFAM" id="SSF51391">
    <property type="entry name" value="Thiamin phosphate synthase"/>
    <property type="match status" value="1"/>
</dbReference>
<comment type="function">
    <text evidence="1">Condenses 4-methyl-5-(beta-hydroxyethyl)thiazole monophosphate (THZ-P) and 2-methyl-4-amino-5-hydroxymethyl pyrimidine pyrophosphate (HMP-PP) to form thiamine monophosphate (TMP).</text>
</comment>
<comment type="catalytic activity">
    <reaction evidence="1">
        <text>2-[(2R,5Z)-2-carboxy-4-methylthiazol-5(2H)-ylidene]ethyl phosphate + 4-amino-2-methyl-5-(diphosphooxymethyl)pyrimidine + 2 H(+) = thiamine phosphate + CO2 + diphosphate</text>
        <dbReference type="Rhea" id="RHEA:47844"/>
        <dbReference type="ChEBI" id="CHEBI:15378"/>
        <dbReference type="ChEBI" id="CHEBI:16526"/>
        <dbReference type="ChEBI" id="CHEBI:33019"/>
        <dbReference type="ChEBI" id="CHEBI:37575"/>
        <dbReference type="ChEBI" id="CHEBI:57841"/>
        <dbReference type="ChEBI" id="CHEBI:62899"/>
        <dbReference type="EC" id="2.5.1.3"/>
    </reaction>
</comment>
<comment type="catalytic activity">
    <reaction evidence="1">
        <text>2-(2-carboxy-4-methylthiazol-5-yl)ethyl phosphate + 4-amino-2-methyl-5-(diphosphooxymethyl)pyrimidine + 2 H(+) = thiamine phosphate + CO2 + diphosphate</text>
        <dbReference type="Rhea" id="RHEA:47848"/>
        <dbReference type="ChEBI" id="CHEBI:15378"/>
        <dbReference type="ChEBI" id="CHEBI:16526"/>
        <dbReference type="ChEBI" id="CHEBI:33019"/>
        <dbReference type="ChEBI" id="CHEBI:37575"/>
        <dbReference type="ChEBI" id="CHEBI:57841"/>
        <dbReference type="ChEBI" id="CHEBI:62890"/>
        <dbReference type="EC" id="2.5.1.3"/>
    </reaction>
</comment>
<comment type="catalytic activity">
    <reaction evidence="1">
        <text>4-methyl-5-(2-phosphooxyethyl)-thiazole + 4-amino-2-methyl-5-(diphosphooxymethyl)pyrimidine + H(+) = thiamine phosphate + diphosphate</text>
        <dbReference type="Rhea" id="RHEA:22328"/>
        <dbReference type="ChEBI" id="CHEBI:15378"/>
        <dbReference type="ChEBI" id="CHEBI:33019"/>
        <dbReference type="ChEBI" id="CHEBI:37575"/>
        <dbReference type="ChEBI" id="CHEBI:57841"/>
        <dbReference type="ChEBI" id="CHEBI:58296"/>
        <dbReference type="EC" id="2.5.1.3"/>
    </reaction>
</comment>
<comment type="cofactor">
    <cofactor evidence="1">
        <name>Mg(2+)</name>
        <dbReference type="ChEBI" id="CHEBI:18420"/>
    </cofactor>
    <text evidence="1">Binds 1 Mg(2+) ion per subunit.</text>
</comment>
<comment type="pathway">
    <text evidence="1">Cofactor biosynthesis; thiamine diphosphate biosynthesis; thiamine phosphate from 4-amino-2-methyl-5-diphosphomethylpyrimidine and 4-methyl-5-(2-phosphoethyl)-thiazole: step 1/1.</text>
</comment>
<comment type="similarity">
    <text evidence="1">Belongs to the thiamine-phosphate synthase family.</text>
</comment>
<keyword id="KW-0460">Magnesium</keyword>
<keyword id="KW-0479">Metal-binding</keyword>
<keyword id="KW-0784">Thiamine biosynthesis</keyword>
<keyword id="KW-0808">Transferase</keyword>
<feature type="chain" id="PRO_1000008140" description="Thiamine-phosphate synthase">
    <location>
        <begin position="1"/>
        <end position="226"/>
    </location>
</feature>
<feature type="binding site" evidence="1">
    <location>
        <begin position="46"/>
        <end position="50"/>
    </location>
    <ligand>
        <name>4-amino-2-methyl-5-(diphosphooxymethyl)pyrimidine</name>
        <dbReference type="ChEBI" id="CHEBI:57841"/>
    </ligand>
</feature>
<feature type="binding site" evidence="1">
    <location>
        <position position="83"/>
    </location>
    <ligand>
        <name>4-amino-2-methyl-5-(diphosphooxymethyl)pyrimidine</name>
        <dbReference type="ChEBI" id="CHEBI:57841"/>
    </ligand>
</feature>
<feature type="binding site" evidence="1">
    <location>
        <position position="84"/>
    </location>
    <ligand>
        <name>Mg(2+)</name>
        <dbReference type="ChEBI" id="CHEBI:18420"/>
    </ligand>
</feature>
<feature type="binding site" evidence="1">
    <location>
        <position position="103"/>
    </location>
    <ligand>
        <name>Mg(2+)</name>
        <dbReference type="ChEBI" id="CHEBI:18420"/>
    </ligand>
</feature>
<feature type="binding site" evidence="1">
    <location>
        <position position="122"/>
    </location>
    <ligand>
        <name>4-amino-2-methyl-5-(diphosphooxymethyl)pyrimidine</name>
        <dbReference type="ChEBI" id="CHEBI:57841"/>
    </ligand>
</feature>
<feature type="binding site" evidence="1">
    <location>
        <begin position="149"/>
        <end position="151"/>
    </location>
    <ligand>
        <name>2-[(2R,5Z)-2-carboxy-4-methylthiazol-5(2H)-ylidene]ethyl phosphate</name>
        <dbReference type="ChEBI" id="CHEBI:62899"/>
    </ligand>
</feature>
<feature type="binding site" evidence="1">
    <location>
        <position position="152"/>
    </location>
    <ligand>
        <name>4-amino-2-methyl-5-(diphosphooxymethyl)pyrimidine</name>
        <dbReference type="ChEBI" id="CHEBI:57841"/>
    </ligand>
</feature>
<feature type="binding site" evidence="1">
    <location>
        <position position="181"/>
    </location>
    <ligand>
        <name>2-[(2R,5Z)-2-carboxy-4-methylthiazol-5(2H)-ylidene]ethyl phosphate</name>
        <dbReference type="ChEBI" id="CHEBI:62899"/>
    </ligand>
</feature>
<feature type="binding site" evidence="1">
    <location>
        <begin position="201"/>
        <end position="202"/>
    </location>
    <ligand>
        <name>2-[(2R,5Z)-2-carboxy-4-methylthiazol-5(2H)-ylidene]ethyl phosphate</name>
        <dbReference type="ChEBI" id="CHEBI:62899"/>
    </ligand>
</feature>